<comment type="function">
    <text>Vasotocin is an antidiuretic hormone.</text>
</comment>
<comment type="subcellular location">
    <subcellularLocation>
        <location>Secreted</location>
    </subcellularLocation>
</comment>
<comment type="PTM">
    <text>Seven disulfide bonds are present in neurophysin.</text>
</comment>
<comment type="similarity">
    <text evidence="3">Belongs to the vasopressin/oxytocin family.</text>
</comment>
<evidence type="ECO:0000250" key="1">
    <source>
        <dbReference type="UniProtKB" id="P01175"/>
    </source>
</evidence>
<evidence type="ECO:0000269" key="2">
    <source>
    </source>
</evidence>
<evidence type="ECO:0000305" key="3"/>
<keyword id="KW-0027">Amidation</keyword>
<keyword id="KW-0165">Cleavage on pair of basic residues</keyword>
<keyword id="KW-0903">Direct protein sequencing</keyword>
<keyword id="KW-1015">Disulfide bond</keyword>
<keyword id="KW-0325">Glycoprotein</keyword>
<keyword id="KW-0372">Hormone</keyword>
<keyword id="KW-0964">Secreted</keyword>
<dbReference type="PIR" id="A27482">
    <property type="entry name" value="A27482"/>
</dbReference>
<dbReference type="PIR" id="A33900">
    <property type="entry name" value="A33900"/>
</dbReference>
<dbReference type="SMR" id="P11858"/>
<dbReference type="GO" id="GO:0005615">
    <property type="term" value="C:extracellular space"/>
    <property type="evidence" value="ECO:0007669"/>
    <property type="project" value="TreeGrafter"/>
</dbReference>
<dbReference type="GO" id="GO:0030141">
    <property type="term" value="C:secretory granule"/>
    <property type="evidence" value="ECO:0007669"/>
    <property type="project" value="TreeGrafter"/>
</dbReference>
<dbReference type="GO" id="GO:0005185">
    <property type="term" value="F:neurohypophyseal hormone activity"/>
    <property type="evidence" value="ECO:0007669"/>
    <property type="project" value="InterPro"/>
</dbReference>
<dbReference type="FunFam" id="2.60.9.10:FF:000001">
    <property type="entry name" value="oxytocin-neurophysin 1"/>
    <property type="match status" value="1"/>
</dbReference>
<dbReference type="Gene3D" id="2.60.9.10">
    <property type="entry name" value="Neurohypophysial hormone domain"/>
    <property type="match status" value="1"/>
</dbReference>
<dbReference type="InterPro" id="IPR000981">
    <property type="entry name" value="Neurhyp_horm"/>
</dbReference>
<dbReference type="InterPro" id="IPR036387">
    <property type="entry name" value="Neurhyp_horm_dom_sf"/>
</dbReference>
<dbReference type="InterPro" id="IPR022423">
    <property type="entry name" value="Neurohypophysial_hormone_CS"/>
</dbReference>
<dbReference type="PANTHER" id="PTHR11681">
    <property type="entry name" value="NEUROPHYSIN"/>
    <property type="match status" value="1"/>
</dbReference>
<dbReference type="PANTHER" id="PTHR11681:SF15">
    <property type="entry name" value="VASOTOCIN-NEUROPHYSIN VT"/>
    <property type="match status" value="1"/>
</dbReference>
<dbReference type="Pfam" id="PF00220">
    <property type="entry name" value="Hormone_4"/>
    <property type="match status" value="1"/>
</dbReference>
<dbReference type="Pfam" id="PF00184">
    <property type="entry name" value="Hormone_5"/>
    <property type="match status" value="1"/>
</dbReference>
<dbReference type="PIRSF" id="PIRSF001815">
    <property type="entry name" value="Nonapeptide_hormone_precursor"/>
    <property type="match status" value="1"/>
</dbReference>
<dbReference type="PRINTS" id="PR00831">
    <property type="entry name" value="NEUROPHYSIN"/>
</dbReference>
<dbReference type="SMART" id="SM00003">
    <property type="entry name" value="NH"/>
    <property type="match status" value="1"/>
</dbReference>
<dbReference type="SUPFAM" id="SSF49606">
    <property type="entry name" value="Neurophysin II"/>
    <property type="match status" value="1"/>
</dbReference>
<dbReference type="PROSITE" id="PS00264">
    <property type="entry name" value="NEUROHYPOPHYS_HORM"/>
    <property type="match status" value="1"/>
</dbReference>
<protein>
    <recommendedName>
        <fullName>Vasotocin-neurophysin VT</fullName>
        <shortName>VT</shortName>
    </recommendedName>
    <component>
        <recommendedName>
            <fullName>Hydrin-2</fullName>
        </recommendedName>
        <alternativeName>
            <fullName>Hydrin II</fullName>
        </alternativeName>
    </component>
    <component>
        <recommendedName>
            <fullName>Vasotocin</fullName>
        </recommendedName>
    </component>
    <component>
        <recommendedName>
            <fullName>Neurophysin VT</fullName>
        </recommendedName>
    </component>
</protein>
<feature type="peptide" id="PRO_0000020541" description="Hydrin-2">
    <location>
        <begin position="1"/>
        <end position="10"/>
    </location>
</feature>
<feature type="peptide" id="PRO_0000020542" description="Vasotocin">
    <location>
        <begin position="1"/>
        <end position="9"/>
    </location>
</feature>
<feature type="chain" id="PRO_0000020543" description="Neurophysin VT">
    <location>
        <begin position="13"/>
        <end position="141"/>
    </location>
</feature>
<feature type="modified residue" description="Glycine amide" evidence="2">
    <location>
        <position position="9"/>
    </location>
</feature>
<feature type="glycosylation site" description="N-linked (GlcNAc...) asparagine" evidence="3">
    <location>
        <position position="117"/>
    </location>
</feature>
<feature type="disulfide bond" evidence="1">
    <location>
        <begin position="1"/>
        <end position="6"/>
    </location>
</feature>
<feature type="disulfide bond" evidence="1">
    <location>
        <begin position="22"/>
        <end position="66"/>
    </location>
</feature>
<feature type="disulfide bond" evidence="1">
    <location>
        <begin position="25"/>
        <end position="39"/>
    </location>
</feature>
<feature type="disulfide bond" evidence="1">
    <location>
        <begin position="33"/>
        <end position="56"/>
    </location>
</feature>
<feature type="disulfide bond" evidence="1">
    <location>
        <begin position="40"/>
        <end position="46"/>
    </location>
</feature>
<feature type="disulfide bond" evidence="1">
    <location>
        <begin position="73"/>
        <end position="85"/>
    </location>
</feature>
<feature type="disulfide bond" evidence="1">
    <location>
        <begin position="79"/>
        <end position="97"/>
    </location>
</feature>
<feature type="disulfide bond" evidence="1">
    <location>
        <begin position="86"/>
        <end position="91"/>
    </location>
</feature>
<organism>
    <name type="scientific">Pelophylax lessonae</name>
    <name type="common">Pool frog</name>
    <name type="synonym">Rana lessonae</name>
    <dbReference type="NCBI Taxonomy" id="45623"/>
    <lineage>
        <taxon>Eukaryota</taxon>
        <taxon>Metazoa</taxon>
        <taxon>Chordata</taxon>
        <taxon>Craniata</taxon>
        <taxon>Vertebrata</taxon>
        <taxon>Euteleostomi</taxon>
        <taxon>Amphibia</taxon>
        <taxon>Batrachia</taxon>
        <taxon>Anura</taxon>
        <taxon>Neobatrachia</taxon>
        <taxon>Ranoidea</taxon>
        <taxon>Ranidae</taxon>
        <taxon>Pelophylax</taxon>
    </lineage>
</organism>
<reference key="1">
    <citation type="journal article" date="1987" name="Biochem. Biophys. Res. Commun.">
        <title>One-step processing of the amphibian vasotocin precursor: structure of a frog (Rana esculenta) 'big' neurophysin.</title>
        <authorList>
            <person name="Michel G."/>
            <person name="Chauvet J."/>
            <person name="Chauvet M.-T."/>
            <person name="Acher R."/>
        </authorList>
    </citation>
    <scope>PROTEIN SEQUENCE</scope>
    <scope>AMIDATION AT GLY-9</scope>
</reference>
<reference key="2">
    <citation type="journal article" date="1988" name="FEBS Lett.">
        <title>An amphibian two-domain 'big' neurophysin: conformational homology with the mammalian MSEL-neurophysin/copeptin intermediate precursor shown by trypsin-sepharose proteolysis.</title>
        <authorList>
            <person name="Chauvet J."/>
            <person name="Michel G."/>
            <person name="Chauvet M.-T."/>
            <person name="Acher R."/>
        </authorList>
    </citation>
    <scope>PROTEIN SEQUENCE OF 13-141</scope>
</reference>
<reference key="3">
    <citation type="journal article" date="1989" name="Proc. Natl. Acad. Sci. U.S.A.">
        <title>Hydrins, hydroosmotic neurohypophysial peptides: osmoregulatory adaptation in amphibians through vasotocin precursor processing.</title>
        <authorList>
            <person name="Rouille Y."/>
            <person name="Michel G."/>
            <person name="Chauvet M.-T."/>
            <person name="Chauvet J."/>
            <person name="Acher R."/>
        </authorList>
    </citation>
    <scope>PROTEIN SEQUENCE OF 1-10</scope>
</reference>
<name>NEUV_PELLE</name>
<proteinExistence type="evidence at protein level"/>
<accession>P11858</accession>
<sequence length="141" mass="15322">CYIQNCPRGGKRSYPDTEVRQCIPCGPGNRGNCFGPNICCGEDLGCYIGTPETLRCVEENYLPSPCEAGGKPCGAGGRCAAPGVCCNDQSCTMDSSCLDEDSERQRVSPDQNMTQMNGSASDLLLRLMHMANRQQQQTKHY</sequence>